<gene>
    <name evidence="1" type="primary">pyrB</name>
    <name type="ordered locus">PC1_0367</name>
</gene>
<feature type="chain" id="PRO_1000201597" description="Aspartate carbamoyltransferase catalytic subunit">
    <location>
        <begin position="1"/>
        <end position="311"/>
    </location>
</feature>
<feature type="binding site" evidence="1">
    <location>
        <position position="55"/>
    </location>
    <ligand>
        <name>carbamoyl phosphate</name>
        <dbReference type="ChEBI" id="CHEBI:58228"/>
    </ligand>
</feature>
<feature type="binding site" evidence="1">
    <location>
        <position position="56"/>
    </location>
    <ligand>
        <name>carbamoyl phosphate</name>
        <dbReference type="ChEBI" id="CHEBI:58228"/>
    </ligand>
</feature>
<feature type="binding site" evidence="1">
    <location>
        <position position="85"/>
    </location>
    <ligand>
        <name>L-aspartate</name>
        <dbReference type="ChEBI" id="CHEBI:29991"/>
    </ligand>
</feature>
<feature type="binding site" evidence="1">
    <location>
        <position position="106"/>
    </location>
    <ligand>
        <name>carbamoyl phosphate</name>
        <dbReference type="ChEBI" id="CHEBI:58228"/>
    </ligand>
</feature>
<feature type="binding site" evidence="1">
    <location>
        <position position="135"/>
    </location>
    <ligand>
        <name>carbamoyl phosphate</name>
        <dbReference type="ChEBI" id="CHEBI:58228"/>
    </ligand>
</feature>
<feature type="binding site" evidence="1">
    <location>
        <position position="138"/>
    </location>
    <ligand>
        <name>carbamoyl phosphate</name>
        <dbReference type="ChEBI" id="CHEBI:58228"/>
    </ligand>
</feature>
<feature type="binding site" evidence="1">
    <location>
        <position position="168"/>
    </location>
    <ligand>
        <name>L-aspartate</name>
        <dbReference type="ChEBI" id="CHEBI:29991"/>
    </ligand>
</feature>
<feature type="binding site" evidence="1">
    <location>
        <position position="230"/>
    </location>
    <ligand>
        <name>L-aspartate</name>
        <dbReference type="ChEBI" id="CHEBI:29991"/>
    </ligand>
</feature>
<feature type="binding site" evidence="1">
    <location>
        <position position="268"/>
    </location>
    <ligand>
        <name>carbamoyl phosphate</name>
        <dbReference type="ChEBI" id="CHEBI:58228"/>
    </ligand>
</feature>
<feature type="binding site" evidence="1">
    <location>
        <position position="269"/>
    </location>
    <ligand>
        <name>carbamoyl phosphate</name>
        <dbReference type="ChEBI" id="CHEBI:58228"/>
    </ligand>
</feature>
<reference key="1">
    <citation type="submission" date="2009-07" db="EMBL/GenBank/DDBJ databases">
        <title>Complete sequence of Pectobacterium carotovorum subsp. carotovorum PC1.</title>
        <authorList>
            <consortium name="US DOE Joint Genome Institute"/>
            <person name="Lucas S."/>
            <person name="Copeland A."/>
            <person name="Lapidus A."/>
            <person name="Glavina del Rio T."/>
            <person name="Tice H."/>
            <person name="Bruce D."/>
            <person name="Goodwin L."/>
            <person name="Pitluck S."/>
            <person name="Munk A.C."/>
            <person name="Brettin T."/>
            <person name="Detter J.C."/>
            <person name="Han C."/>
            <person name="Tapia R."/>
            <person name="Larimer F."/>
            <person name="Land M."/>
            <person name="Hauser L."/>
            <person name="Kyrpides N."/>
            <person name="Mikhailova N."/>
            <person name="Balakrishnan V."/>
            <person name="Glasner J."/>
            <person name="Perna N.T."/>
        </authorList>
    </citation>
    <scope>NUCLEOTIDE SEQUENCE [LARGE SCALE GENOMIC DNA]</scope>
    <source>
        <strain>PC1</strain>
    </source>
</reference>
<accession>C6DJL3</accession>
<name>PYRB_PECCP</name>
<protein>
    <recommendedName>
        <fullName evidence="1">Aspartate carbamoyltransferase catalytic subunit</fullName>
        <ecNumber evidence="1">2.1.3.2</ecNumber>
    </recommendedName>
    <alternativeName>
        <fullName evidence="1">Aspartate transcarbamylase</fullName>
        <shortName evidence="1">ATCase</shortName>
    </alternativeName>
</protein>
<sequence length="311" mass="34612">MVNPLYQKHIISINDLSREDLELTLRVAASLKAKPQPELLKHKVIASCFFEASTRTRLSFETAMHRLGASVVGFADSNNTSLGKKGETLADTISVISQYVDAIVMRHPQEGASRLATEFSGGIPVLNAGDGANQHPTQTLLDLFTIQETQGRLNNINIAMVGDLKYGRTVHSLTQALAKFEGNRFYFIAPDALAMPDYILSMLKEKNIAYSLHNSIDEVVGELDILYMTRVQKERLDPSEYINIKSQFVLRAADLHSARPNLKVLHPLPRVDEITIDVDATPYAYYFQQAGNGIYARQALLALVLNRELVL</sequence>
<proteinExistence type="inferred from homology"/>
<comment type="function">
    <text evidence="1">Catalyzes the condensation of carbamoyl phosphate and aspartate to form carbamoyl aspartate and inorganic phosphate, the committed step in the de novo pyrimidine nucleotide biosynthesis pathway.</text>
</comment>
<comment type="catalytic activity">
    <reaction evidence="1">
        <text>carbamoyl phosphate + L-aspartate = N-carbamoyl-L-aspartate + phosphate + H(+)</text>
        <dbReference type="Rhea" id="RHEA:20013"/>
        <dbReference type="ChEBI" id="CHEBI:15378"/>
        <dbReference type="ChEBI" id="CHEBI:29991"/>
        <dbReference type="ChEBI" id="CHEBI:32814"/>
        <dbReference type="ChEBI" id="CHEBI:43474"/>
        <dbReference type="ChEBI" id="CHEBI:58228"/>
        <dbReference type="EC" id="2.1.3.2"/>
    </reaction>
</comment>
<comment type="pathway">
    <text evidence="1">Pyrimidine metabolism; UMP biosynthesis via de novo pathway; (S)-dihydroorotate from bicarbonate: step 2/3.</text>
</comment>
<comment type="subunit">
    <text evidence="1">Heterododecamer (2C3:3R2) of six catalytic PyrB chains organized as two trimers (C3), and six regulatory PyrI chains organized as three dimers (R2).</text>
</comment>
<comment type="similarity">
    <text evidence="1">Belongs to the aspartate/ornithine carbamoyltransferase superfamily. ATCase family.</text>
</comment>
<keyword id="KW-0665">Pyrimidine biosynthesis</keyword>
<keyword id="KW-0808">Transferase</keyword>
<organism>
    <name type="scientific">Pectobacterium carotovorum subsp. carotovorum (strain PC1)</name>
    <dbReference type="NCBI Taxonomy" id="561230"/>
    <lineage>
        <taxon>Bacteria</taxon>
        <taxon>Pseudomonadati</taxon>
        <taxon>Pseudomonadota</taxon>
        <taxon>Gammaproteobacteria</taxon>
        <taxon>Enterobacterales</taxon>
        <taxon>Pectobacteriaceae</taxon>
        <taxon>Pectobacterium</taxon>
    </lineage>
</organism>
<evidence type="ECO:0000255" key="1">
    <source>
        <dbReference type="HAMAP-Rule" id="MF_00001"/>
    </source>
</evidence>
<dbReference type="EC" id="2.1.3.2" evidence="1"/>
<dbReference type="EMBL" id="CP001657">
    <property type="protein sequence ID" value="ACT11426.1"/>
    <property type="molecule type" value="Genomic_DNA"/>
</dbReference>
<dbReference type="RefSeq" id="WP_012773083.1">
    <property type="nucleotide sequence ID" value="NC_012917.1"/>
</dbReference>
<dbReference type="SMR" id="C6DJL3"/>
<dbReference type="STRING" id="561230.PC1_0367"/>
<dbReference type="KEGG" id="pct:PC1_0367"/>
<dbReference type="eggNOG" id="COG0540">
    <property type="taxonomic scope" value="Bacteria"/>
</dbReference>
<dbReference type="HOGENOM" id="CLU_043846_1_2_6"/>
<dbReference type="OrthoDB" id="9774690at2"/>
<dbReference type="UniPathway" id="UPA00070">
    <property type="reaction ID" value="UER00116"/>
</dbReference>
<dbReference type="Proteomes" id="UP000002736">
    <property type="component" value="Chromosome"/>
</dbReference>
<dbReference type="GO" id="GO:0005829">
    <property type="term" value="C:cytosol"/>
    <property type="evidence" value="ECO:0007669"/>
    <property type="project" value="TreeGrafter"/>
</dbReference>
<dbReference type="GO" id="GO:0016597">
    <property type="term" value="F:amino acid binding"/>
    <property type="evidence" value="ECO:0007669"/>
    <property type="project" value="InterPro"/>
</dbReference>
<dbReference type="GO" id="GO:0004070">
    <property type="term" value="F:aspartate carbamoyltransferase activity"/>
    <property type="evidence" value="ECO:0007669"/>
    <property type="project" value="UniProtKB-UniRule"/>
</dbReference>
<dbReference type="GO" id="GO:0006207">
    <property type="term" value="P:'de novo' pyrimidine nucleobase biosynthetic process"/>
    <property type="evidence" value="ECO:0007669"/>
    <property type="project" value="InterPro"/>
</dbReference>
<dbReference type="GO" id="GO:0044205">
    <property type="term" value="P:'de novo' UMP biosynthetic process"/>
    <property type="evidence" value="ECO:0007669"/>
    <property type="project" value="UniProtKB-UniRule"/>
</dbReference>
<dbReference type="GO" id="GO:0006520">
    <property type="term" value="P:amino acid metabolic process"/>
    <property type="evidence" value="ECO:0007669"/>
    <property type="project" value="InterPro"/>
</dbReference>
<dbReference type="FunFam" id="3.40.50.1370:FF:000001">
    <property type="entry name" value="Aspartate carbamoyltransferase"/>
    <property type="match status" value="1"/>
</dbReference>
<dbReference type="FunFam" id="3.40.50.1370:FF:000002">
    <property type="entry name" value="Aspartate carbamoyltransferase 2"/>
    <property type="match status" value="1"/>
</dbReference>
<dbReference type="Gene3D" id="3.40.50.1370">
    <property type="entry name" value="Aspartate/ornithine carbamoyltransferase"/>
    <property type="match status" value="2"/>
</dbReference>
<dbReference type="HAMAP" id="MF_00001">
    <property type="entry name" value="Asp_carb_tr"/>
    <property type="match status" value="1"/>
</dbReference>
<dbReference type="InterPro" id="IPR006132">
    <property type="entry name" value="Asp/Orn_carbamoyltranf_P-bd"/>
</dbReference>
<dbReference type="InterPro" id="IPR006130">
    <property type="entry name" value="Asp/Orn_carbamoylTrfase"/>
</dbReference>
<dbReference type="InterPro" id="IPR036901">
    <property type="entry name" value="Asp/Orn_carbamoylTrfase_sf"/>
</dbReference>
<dbReference type="InterPro" id="IPR002082">
    <property type="entry name" value="Asp_carbamoyltransf"/>
</dbReference>
<dbReference type="InterPro" id="IPR006131">
    <property type="entry name" value="Asp_carbamoyltransf_Asp/Orn-bd"/>
</dbReference>
<dbReference type="NCBIfam" id="TIGR00670">
    <property type="entry name" value="asp_carb_tr"/>
    <property type="match status" value="1"/>
</dbReference>
<dbReference type="NCBIfam" id="NF002032">
    <property type="entry name" value="PRK00856.1"/>
    <property type="match status" value="1"/>
</dbReference>
<dbReference type="PANTHER" id="PTHR45753:SF6">
    <property type="entry name" value="ASPARTATE CARBAMOYLTRANSFERASE"/>
    <property type="match status" value="1"/>
</dbReference>
<dbReference type="PANTHER" id="PTHR45753">
    <property type="entry name" value="ORNITHINE CARBAMOYLTRANSFERASE, MITOCHONDRIAL"/>
    <property type="match status" value="1"/>
</dbReference>
<dbReference type="Pfam" id="PF00185">
    <property type="entry name" value="OTCace"/>
    <property type="match status" value="1"/>
</dbReference>
<dbReference type="Pfam" id="PF02729">
    <property type="entry name" value="OTCace_N"/>
    <property type="match status" value="1"/>
</dbReference>
<dbReference type="PRINTS" id="PR00100">
    <property type="entry name" value="AOTCASE"/>
</dbReference>
<dbReference type="PRINTS" id="PR00101">
    <property type="entry name" value="ATCASE"/>
</dbReference>
<dbReference type="SUPFAM" id="SSF53671">
    <property type="entry name" value="Aspartate/ornithine carbamoyltransferase"/>
    <property type="match status" value="1"/>
</dbReference>
<dbReference type="PROSITE" id="PS00097">
    <property type="entry name" value="CARBAMOYLTRANSFERASE"/>
    <property type="match status" value="1"/>
</dbReference>